<feature type="chain" id="PRO_0000266197" description="CTP synthase">
    <location>
        <begin position="1"/>
        <end position="555"/>
    </location>
</feature>
<feature type="domain" description="Glutamine amidotransferase type-1" evidence="1">
    <location>
        <begin position="295"/>
        <end position="547"/>
    </location>
</feature>
<feature type="region of interest" description="Amidoligase domain" evidence="1">
    <location>
        <begin position="1"/>
        <end position="270"/>
    </location>
</feature>
<feature type="active site" description="Nucleophile; for glutamine hydrolysis" evidence="1">
    <location>
        <position position="383"/>
    </location>
</feature>
<feature type="active site" evidence="1">
    <location>
        <position position="520"/>
    </location>
</feature>
<feature type="active site" evidence="1">
    <location>
        <position position="522"/>
    </location>
</feature>
<feature type="binding site" evidence="1">
    <location>
        <position position="13"/>
    </location>
    <ligand>
        <name>CTP</name>
        <dbReference type="ChEBI" id="CHEBI:37563"/>
        <note>allosteric inhibitor</note>
    </ligand>
</feature>
<feature type="binding site" evidence="1">
    <location>
        <position position="13"/>
    </location>
    <ligand>
        <name>UTP</name>
        <dbReference type="ChEBI" id="CHEBI:46398"/>
    </ligand>
</feature>
<feature type="binding site" evidence="1">
    <location>
        <begin position="14"/>
        <end position="19"/>
    </location>
    <ligand>
        <name>ATP</name>
        <dbReference type="ChEBI" id="CHEBI:30616"/>
    </ligand>
</feature>
<feature type="binding site" evidence="1">
    <location>
        <position position="71"/>
    </location>
    <ligand>
        <name>ATP</name>
        <dbReference type="ChEBI" id="CHEBI:30616"/>
    </ligand>
</feature>
<feature type="binding site" evidence="1">
    <location>
        <position position="71"/>
    </location>
    <ligand>
        <name>Mg(2+)</name>
        <dbReference type="ChEBI" id="CHEBI:18420"/>
    </ligand>
</feature>
<feature type="binding site" evidence="1">
    <location>
        <position position="144"/>
    </location>
    <ligand>
        <name>Mg(2+)</name>
        <dbReference type="ChEBI" id="CHEBI:18420"/>
    </ligand>
</feature>
<feature type="binding site" evidence="1">
    <location>
        <begin position="151"/>
        <end position="153"/>
    </location>
    <ligand>
        <name>CTP</name>
        <dbReference type="ChEBI" id="CHEBI:37563"/>
        <note>allosteric inhibitor</note>
    </ligand>
</feature>
<feature type="binding site" evidence="1">
    <location>
        <begin position="191"/>
        <end position="196"/>
    </location>
    <ligand>
        <name>CTP</name>
        <dbReference type="ChEBI" id="CHEBI:37563"/>
        <note>allosteric inhibitor</note>
    </ligand>
</feature>
<feature type="binding site" evidence="1">
    <location>
        <begin position="191"/>
        <end position="196"/>
    </location>
    <ligand>
        <name>UTP</name>
        <dbReference type="ChEBI" id="CHEBI:46398"/>
    </ligand>
</feature>
<feature type="binding site" evidence="1">
    <location>
        <position position="227"/>
    </location>
    <ligand>
        <name>CTP</name>
        <dbReference type="ChEBI" id="CHEBI:37563"/>
        <note>allosteric inhibitor</note>
    </ligand>
</feature>
<feature type="binding site" evidence="1">
    <location>
        <position position="227"/>
    </location>
    <ligand>
        <name>UTP</name>
        <dbReference type="ChEBI" id="CHEBI:46398"/>
    </ligand>
</feature>
<feature type="binding site" evidence="1">
    <location>
        <position position="356"/>
    </location>
    <ligand>
        <name>L-glutamine</name>
        <dbReference type="ChEBI" id="CHEBI:58359"/>
    </ligand>
</feature>
<feature type="binding site" evidence="1">
    <location>
        <begin position="384"/>
        <end position="387"/>
    </location>
    <ligand>
        <name>L-glutamine</name>
        <dbReference type="ChEBI" id="CHEBI:58359"/>
    </ligand>
</feature>
<feature type="binding site" evidence="1">
    <location>
        <position position="407"/>
    </location>
    <ligand>
        <name>L-glutamine</name>
        <dbReference type="ChEBI" id="CHEBI:58359"/>
    </ligand>
</feature>
<feature type="binding site" evidence="1">
    <location>
        <position position="473"/>
    </location>
    <ligand>
        <name>L-glutamine</name>
        <dbReference type="ChEBI" id="CHEBI:58359"/>
    </ligand>
</feature>
<organism>
    <name type="scientific">Albidiferax ferrireducens (strain ATCC BAA-621 / DSM 15236 / T118)</name>
    <name type="common">Rhodoferax ferrireducens</name>
    <dbReference type="NCBI Taxonomy" id="338969"/>
    <lineage>
        <taxon>Bacteria</taxon>
        <taxon>Pseudomonadati</taxon>
        <taxon>Pseudomonadota</taxon>
        <taxon>Betaproteobacteria</taxon>
        <taxon>Burkholderiales</taxon>
        <taxon>Comamonadaceae</taxon>
        <taxon>Rhodoferax</taxon>
    </lineage>
</organism>
<accession>Q21V39</accession>
<dbReference type="EC" id="6.3.4.2" evidence="1"/>
<dbReference type="EMBL" id="CP000267">
    <property type="protein sequence ID" value="ABD70364.1"/>
    <property type="molecule type" value="Genomic_DNA"/>
</dbReference>
<dbReference type="RefSeq" id="WP_011464932.1">
    <property type="nucleotide sequence ID" value="NC_007908.1"/>
</dbReference>
<dbReference type="SMR" id="Q21V39"/>
<dbReference type="STRING" id="338969.Rfer_2648"/>
<dbReference type="KEGG" id="rfr:Rfer_2648"/>
<dbReference type="eggNOG" id="COG0504">
    <property type="taxonomic scope" value="Bacteria"/>
</dbReference>
<dbReference type="HOGENOM" id="CLU_011675_5_0_4"/>
<dbReference type="OrthoDB" id="9801107at2"/>
<dbReference type="UniPathway" id="UPA00159">
    <property type="reaction ID" value="UER00277"/>
</dbReference>
<dbReference type="Proteomes" id="UP000008332">
    <property type="component" value="Chromosome"/>
</dbReference>
<dbReference type="GO" id="GO:0005829">
    <property type="term" value="C:cytosol"/>
    <property type="evidence" value="ECO:0007669"/>
    <property type="project" value="TreeGrafter"/>
</dbReference>
<dbReference type="GO" id="GO:0005524">
    <property type="term" value="F:ATP binding"/>
    <property type="evidence" value="ECO:0007669"/>
    <property type="project" value="UniProtKB-KW"/>
</dbReference>
<dbReference type="GO" id="GO:0003883">
    <property type="term" value="F:CTP synthase activity"/>
    <property type="evidence" value="ECO:0007669"/>
    <property type="project" value="UniProtKB-UniRule"/>
</dbReference>
<dbReference type="GO" id="GO:0004359">
    <property type="term" value="F:glutaminase activity"/>
    <property type="evidence" value="ECO:0007669"/>
    <property type="project" value="RHEA"/>
</dbReference>
<dbReference type="GO" id="GO:0042802">
    <property type="term" value="F:identical protein binding"/>
    <property type="evidence" value="ECO:0007669"/>
    <property type="project" value="TreeGrafter"/>
</dbReference>
<dbReference type="GO" id="GO:0046872">
    <property type="term" value="F:metal ion binding"/>
    <property type="evidence" value="ECO:0007669"/>
    <property type="project" value="UniProtKB-KW"/>
</dbReference>
<dbReference type="GO" id="GO:0044210">
    <property type="term" value="P:'de novo' CTP biosynthetic process"/>
    <property type="evidence" value="ECO:0007669"/>
    <property type="project" value="UniProtKB-UniRule"/>
</dbReference>
<dbReference type="GO" id="GO:0019856">
    <property type="term" value="P:pyrimidine nucleobase biosynthetic process"/>
    <property type="evidence" value="ECO:0007669"/>
    <property type="project" value="TreeGrafter"/>
</dbReference>
<dbReference type="CDD" id="cd03113">
    <property type="entry name" value="CTPS_N"/>
    <property type="match status" value="1"/>
</dbReference>
<dbReference type="CDD" id="cd01746">
    <property type="entry name" value="GATase1_CTP_Synthase"/>
    <property type="match status" value="1"/>
</dbReference>
<dbReference type="FunFam" id="3.40.50.300:FF:000009">
    <property type="entry name" value="CTP synthase"/>
    <property type="match status" value="1"/>
</dbReference>
<dbReference type="FunFam" id="3.40.50.880:FF:000002">
    <property type="entry name" value="CTP synthase"/>
    <property type="match status" value="1"/>
</dbReference>
<dbReference type="Gene3D" id="3.40.50.880">
    <property type="match status" value="1"/>
</dbReference>
<dbReference type="Gene3D" id="3.40.50.300">
    <property type="entry name" value="P-loop containing nucleotide triphosphate hydrolases"/>
    <property type="match status" value="1"/>
</dbReference>
<dbReference type="HAMAP" id="MF_01227">
    <property type="entry name" value="PyrG"/>
    <property type="match status" value="1"/>
</dbReference>
<dbReference type="InterPro" id="IPR029062">
    <property type="entry name" value="Class_I_gatase-like"/>
</dbReference>
<dbReference type="InterPro" id="IPR004468">
    <property type="entry name" value="CTP_synthase"/>
</dbReference>
<dbReference type="InterPro" id="IPR017456">
    <property type="entry name" value="CTP_synthase_N"/>
</dbReference>
<dbReference type="InterPro" id="IPR017926">
    <property type="entry name" value="GATASE"/>
</dbReference>
<dbReference type="InterPro" id="IPR033828">
    <property type="entry name" value="GATase1_CTP_Synthase"/>
</dbReference>
<dbReference type="InterPro" id="IPR027417">
    <property type="entry name" value="P-loop_NTPase"/>
</dbReference>
<dbReference type="NCBIfam" id="NF003792">
    <property type="entry name" value="PRK05380.1"/>
    <property type="match status" value="1"/>
</dbReference>
<dbReference type="NCBIfam" id="TIGR00337">
    <property type="entry name" value="PyrG"/>
    <property type="match status" value="1"/>
</dbReference>
<dbReference type="PANTHER" id="PTHR11550">
    <property type="entry name" value="CTP SYNTHASE"/>
    <property type="match status" value="1"/>
</dbReference>
<dbReference type="PANTHER" id="PTHR11550:SF0">
    <property type="entry name" value="CTP SYNTHASE-RELATED"/>
    <property type="match status" value="1"/>
</dbReference>
<dbReference type="Pfam" id="PF06418">
    <property type="entry name" value="CTP_synth_N"/>
    <property type="match status" value="1"/>
</dbReference>
<dbReference type="Pfam" id="PF00117">
    <property type="entry name" value="GATase"/>
    <property type="match status" value="1"/>
</dbReference>
<dbReference type="SUPFAM" id="SSF52317">
    <property type="entry name" value="Class I glutamine amidotransferase-like"/>
    <property type="match status" value="1"/>
</dbReference>
<dbReference type="SUPFAM" id="SSF52540">
    <property type="entry name" value="P-loop containing nucleoside triphosphate hydrolases"/>
    <property type="match status" value="1"/>
</dbReference>
<dbReference type="PROSITE" id="PS51273">
    <property type="entry name" value="GATASE_TYPE_1"/>
    <property type="match status" value="1"/>
</dbReference>
<name>PYRG_ALBFT</name>
<comment type="function">
    <text evidence="1">Catalyzes the ATP-dependent amination of UTP to CTP with either L-glutamine or ammonia as the source of nitrogen. Regulates intracellular CTP levels through interactions with the four ribonucleotide triphosphates.</text>
</comment>
<comment type="catalytic activity">
    <reaction evidence="1">
        <text>UTP + L-glutamine + ATP + H2O = CTP + L-glutamate + ADP + phosphate + 2 H(+)</text>
        <dbReference type="Rhea" id="RHEA:26426"/>
        <dbReference type="ChEBI" id="CHEBI:15377"/>
        <dbReference type="ChEBI" id="CHEBI:15378"/>
        <dbReference type="ChEBI" id="CHEBI:29985"/>
        <dbReference type="ChEBI" id="CHEBI:30616"/>
        <dbReference type="ChEBI" id="CHEBI:37563"/>
        <dbReference type="ChEBI" id="CHEBI:43474"/>
        <dbReference type="ChEBI" id="CHEBI:46398"/>
        <dbReference type="ChEBI" id="CHEBI:58359"/>
        <dbReference type="ChEBI" id="CHEBI:456216"/>
        <dbReference type="EC" id="6.3.4.2"/>
    </reaction>
</comment>
<comment type="catalytic activity">
    <reaction evidence="1">
        <text>L-glutamine + H2O = L-glutamate + NH4(+)</text>
        <dbReference type="Rhea" id="RHEA:15889"/>
        <dbReference type="ChEBI" id="CHEBI:15377"/>
        <dbReference type="ChEBI" id="CHEBI:28938"/>
        <dbReference type="ChEBI" id="CHEBI:29985"/>
        <dbReference type="ChEBI" id="CHEBI:58359"/>
    </reaction>
</comment>
<comment type="catalytic activity">
    <reaction evidence="1">
        <text>UTP + NH4(+) + ATP = CTP + ADP + phosphate + 2 H(+)</text>
        <dbReference type="Rhea" id="RHEA:16597"/>
        <dbReference type="ChEBI" id="CHEBI:15378"/>
        <dbReference type="ChEBI" id="CHEBI:28938"/>
        <dbReference type="ChEBI" id="CHEBI:30616"/>
        <dbReference type="ChEBI" id="CHEBI:37563"/>
        <dbReference type="ChEBI" id="CHEBI:43474"/>
        <dbReference type="ChEBI" id="CHEBI:46398"/>
        <dbReference type="ChEBI" id="CHEBI:456216"/>
    </reaction>
</comment>
<comment type="activity regulation">
    <text evidence="1">Allosterically activated by GTP, when glutamine is the substrate; GTP has no effect on the reaction when ammonia is the substrate. The allosteric effector GTP functions by stabilizing the protein conformation that binds the tetrahedral intermediate(s) formed during glutamine hydrolysis. Inhibited by the product CTP, via allosteric rather than competitive inhibition.</text>
</comment>
<comment type="pathway">
    <text evidence="1">Pyrimidine metabolism; CTP biosynthesis via de novo pathway; CTP from UDP: step 2/2.</text>
</comment>
<comment type="subunit">
    <text evidence="1">Homotetramer.</text>
</comment>
<comment type="miscellaneous">
    <text evidence="1">CTPSs have evolved a hybrid strategy for distinguishing between UTP and CTP. The overlapping regions of the product feedback inhibitory and substrate sites recognize a common feature in both compounds, the triphosphate moiety. To differentiate isosteric substrate and product pyrimidine rings, an additional pocket far from the expected kinase/ligase catalytic site, specifically recognizes the cytosine and ribose portions of the product inhibitor.</text>
</comment>
<comment type="similarity">
    <text evidence="1">Belongs to the CTP synthase family.</text>
</comment>
<protein>
    <recommendedName>
        <fullName evidence="1">CTP synthase</fullName>
        <ecNumber evidence="1">6.3.4.2</ecNumber>
    </recommendedName>
    <alternativeName>
        <fullName evidence="1">Cytidine 5'-triphosphate synthase</fullName>
    </alternativeName>
    <alternativeName>
        <fullName evidence="1">Cytidine triphosphate synthetase</fullName>
        <shortName evidence="1">CTP synthetase</shortName>
        <shortName evidence="1">CTPS</shortName>
    </alternativeName>
    <alternativeName>
        <fullName evidence="1">UTP--ammonia ligase</fullName>
    </alternativeName>
</protein>
<evidence type="ECO:0000255" key="1">
    <source>
        <dbReference type="HAMAP-Rule" id="MF_01227"/>
    </source>
</evidence>
<sequence>MTKFVFVTGGVVSSLGKGIASASLAAILESRGLKVTLIKLDPYLNVDPGTMSPFQHGEVFVTNDGAETDLDLGHYERFVETRMRKANNFTTGQIYKSVLEKERRGDYLGKTVQVIPHVTNEIQDFVKRGAGWGTPDAVDVAIVEIGGTVGDIESLPFLEAVRQMSLKLGPNNSAFVHLSYVPWIAAAGELKTKPTQHTAKQLREIGIQADALLCRADRPIPKEEREKISLFSNVPDWAVISMWDVDTIYKVPRMLHEQGLDGLICDKLRLSTPPANLKRWDDLVYETAHPQGDVNIVMVGKYVELSDSYKSLNEAIRHAGMKNHVRVKIDYIDSETITPDNVTQLAKFDAILVPGGFGIRGVEGKICAARFARENKVPYLGICLGMQVATIEFARHVAGLKDANSTEFDPSSPNPVIALITEWKDADGSIKTRDENSDLGGTMRLGAQSSDVVKGTLAHKIYGDVVTERHRHRYEANVHFLDTLRKAGLVISAFTQREHLTEIVELPQSVHPWFMGVQFHPEFNSTPWAGHPLFIAFIKAALDHQAAGKALKAVA</sequence>
<gene>
    <name evidence="1" type="primary">pyrG</name>
    <name type="ordered locus">Rfer_2648</name>
</gene>
<proteinExistence type="inferred from homology"/>
<keyword id="KW-0067">ATP-binding</keyword>
<keyword id="KW-0315">Glutamine amidotransferase</keyword>
<keyword id="KW-0436">Ligase</keyword>
<keyword id="KW-0460">Magnesium</keyword>
<keyword id="KW-0479">Metal-binding</keyword>
<keyword id="KW-0547">Nucleotide-binding</keyword>
<keyword id="KW-0665">Pyrimidine biosynthesis</keyword>
<keyword id="KW-1185">Reference proteome</keyword>
<reference key="1">
    <citation type="submission" date="2006-02" db="EMBL/GenBank/DDBJ databases">
        <title>Complete sequence of chromosome of Rhodoferax ferrireducens DSM 15236.</title>
        <authorList>
            <person name="Copeland A."/>
            <person name="Lucas S."/>
            <person name="Lapidus A."/>
            <person name="Barry K."/>
            <person name="Detter J.C."/>
            <person name="Glavina del Rio T."/>
            <person name="Hammon N."/>
            <person name="Israni S."/>
            <person name="Pitluck S."/>
            <person name="Brettin T."/>
            <person name="Bruce D."/>
            <person name="Han C."/>
            <person name="Tapia R."/>
            <person name="Gilna P."/>
            <person name="Kiss H."/>
            <person name="Schmutz J."/>
            <person name="Larimer F."/>
            <person name="Land M."/>
            <person name="Kyrpides N."/>
            <person name="Ivanova N."/>
            <person name="Richardson P."/>
        </authorList>
    </citation>
    <scope>NUCLEOTIDE SEQUENCE [LARGE SCALE GENOMIC DNA]</scope>
    <source>
        <strain>ATCC BAA-621 / DSM 15236 / T118</strain>
    </source>
</reference>